<name>FUMC_HELPY</name>
<gene>
    <name evidence="1" type="primary">fumC</name>
    <name type="ordered locus">HP_1325</name>
</gene>
<proteinExistence type="inferred from homology"/>
<organism>
    <name type="scientific">Helicobacter pylori (strain ATCC 700392 / 26695)</name>
    <name type="common">Campylobacter pylori</name>
    <dbReference type="NCBI Taxonomy" id="85962"/>
    <lineage>
        <taxon>Bacteria</taxon>
        <taxon>Pseudomonadati</taxon>
        <taxon>Campylobacterota</taxon>
        <taxon>Epsilonproteobacteria</taxon>
        <taxon>Campylobacterales</taxon>
        <taxon>Helicobacteraceae</taxon>
        <taxon>Helicobacter</taxon>
    </lineage>
</organism>
<comment type="function">
    <text evidence="1">Involved in the TCA cycle. Catalyzes the stereospecific interconversion of fumarate to L-malate.</text>
</comment>
<comment type="catalytic activity">
    <reaction evidence="1">
        <text>(S)-malate = fumarate + H2O</text>
        <dbReference type="Rhea" id="RHEA:12460"/>
        <dbReference type="ChEBI" id="CHEBI:15377"/>
        <dbReference type="ChEBI" id="CHEBI:15589"/>
        <dbReference type="ChEBI" id="CHEBI:29806"/>
        <dbReference type="EC" id="4.2.1.2"/>
    </reaction>
</comment>
<comment type="pathway">
    <text evidence="1">Carbohydrate metabolism; tricarboxylic acid cycle; (S)-malate from fumarate: step 1/1.</text>
</comment>
<comment type="subunit">
    <text evidence="1">Homotetramer.</text>
</comment>
<comment type="subcellular location">
    <subcellularLocation>
        <location evidence="1">Cytoplasm</location>
    </subcellularLocation>
</comment>
<comment type="miscellaneous">
    <text evidence="1">There are 2 substrate-binding sites: the catalytic A site, and the non-catalytic B site that may play a role in the transfer of substrate or product between the active site and the solvent. Alternatively, the B site may bind allosteric effectors.</text>
</comment>
<comment type="similarity">
    <text evidence="1">Belongs to the class-II fumarase/aspartase family. Fumarase subfamily.</text>
</comment>
<evidence type="ECO:0000255" key="1">
    <source>
        <dbReference type="HAMAP-Rule" id="MF_00743"/>
    </source>
</evidence>
<accession>O25883</accession>
<reference key="1">
    <citation type="journal article" date="1997" name="Nature">
        <title>The complete genome sequence of the gastric pathogen Helicobacter pylori.</title>
        <authorList>
            <person name="Tomb J.-F."/>
            <person name="White O."/>
            <person name="Kerlavage A.R."/>
            <person name="Clayton R.A."/>
            <person name="Sutton G.G."/>
            <person name="Fleischmann R.D."/>
            <person name="Ketchum K.A."/>
            <person name="Klenk H.-P."/>
            <person name="Gill S.R."/>
            <person name="Dougherty B.A."/>
            <person name="Nelson K.E."/>
            <person name="Quackenbush J."/>
            <person name="Zhou L."/>
            <person name="Kirkness E.F."/>
            <person name="Peterson S.N."/>
            <person name="Loftus B.J."/>
            <person name="Richardson D.L."/>
            <person name="Dodson R.J."/>
            <person name="Khalak H.G."/>
            <person name="Glodek A."/>
            <person name="McKenney K."/>
            <person name="FitzGerald L.M."/>
            <person name="Lee N."/>
            <person name="Adams M.D."/>
            <person name="Hickey E.K."/>
            <person name="Berg D.E."/>
            <person name="Gocayne J.D."/>
            <person name="Utterback T.R."/>
            <person name="Peterson J.D."/>
            <person name="Kelley J.M."/>
            <person name="Cotton M.D."/>
            <person name="Weidman J.F."/>
            <person name="Fujii C."/>
            <person name="Bowman C."/>
            <person name="Watthey L."/>
            <person name="Wallin E."/>
            <person name="Hayes W.S."/>
            <person name="Borodovsky M."/>
            <person name="Karp P.D."/>
            <person name="Smith H.O."/>
            <person name="Fraser C.M."/>
            <person name="Venter J.C."/>
        </authorList>
    </citation>
    <scope>NUCLEOTIDE SEQUENCE [LARGE SCALE GENOMIC DNA]</scope>
    <source>
        <strain>ATCC 700392 / 26695</strain>
    </source>
</reference>
<dbReference type="EC" id="4.2.1.2" evidence="1"/>
<dbReference type="EMBL" id="AE000511">
    <property type="protein sequence ID" value="AAD08368.1"/>
    <property type="molecule type" value="Genomic_DNA"/>
</dbReference>
<dbReference type="PIR" id="E64685">
    <property type="entry name" value="E64685"/>
</dbReference>
<dbReference type="RefSeq" id="NP_208117.1">
    <property type="nucleotide sequence ID" value="NC_000915.1"/>
</dbReference>
<dbReference type="RefSeq" id="WP_001160526.1">
    <property type="nucleotide sequence ID" value="NC_018939.1"/>
</dbReference>
<dbReference type="SMR" id="O25883"/>
<dbReference type="DIP" id="DIP-3320N"/>
<dbReference type="FunCoup" id="O25883">
    <property type="interactions" value="277"/>
</dbReference>
<dbReference type="IntAct" id="O25883">
    <property type="interactions" value="4"/>
</dbReference>
<dbReference type="MINT" id="O25883"/>
<dbReference type="STRING" id="85962.HP_1325"/>
<dbReference type="PaxDb" id="85962-C694_06840"/>
<dbReference type="EnsemblBacteria" id="AAD08368">
    <property type="protein sequence ID" value="AAD08368"/>
    <property type="gene ID" value="HP_1325"/>
</dbReference>
<dbReference type="KEGG" id="heo:C694_06840"/>
<dbReference type="KEGG" id="hpy:HP_1325"/>
<dbReference type="PATRIC" id="fig|85962.47.peg.1419"/>
<dbReference type="eggNOG" id="COG0114">
    <property type="taxonomic scope" value="Bacteria"/>
</dbReference>
<dbReference type="InParanoid" id="O25883"/>
<dbReference type="OrthoDB" id="9802809at2"/>
<dbReference type="PhylomeDB" id="O25883"/>
<dbReference type="BioCyc" id="MetaCyc:HP1325-MONOMER"/>
<dbReference type="SABIO-RK" id="O25883"/>
<dbReference type="UniPathway" id="UPA00223">
    <property type="reaction ID" value="UER01007"/>
</dbReference>
<dbReference type="Proteomes" id="UP000000429">
    <property type="component" value="Chromosome"/>
</dbReference>
<dbReference type="GO" id="GO:0005737">
    <property type="term" value="C:cytoplasm"/>
    <property type="evidence" value="ECO:0007669"/>
    <property type="project" value="UniProtKB-SubCell"/>
</dbReference>
<dbReference type="GO" id="GO:0004333">
    <property type="term" value="F:fumarate hydratase activity"/>
    <property type="evidence" value="ECO:0000318"/>
    <property type="project" value="GO_Central"/>
</dbReference>
<dbReference type="GO" id="GO:0006106">
    <property type="term" value="P:fumarate metabolic process"/>
    <property type="evidence" value="ECO:0000318"/>
    <property type="project" value="GO_Central"/>
</dbReference>
<dbReference type="GO" id="GO:0006108">
    <property type="term" value="P:malate metabolic process"/>
    <property type="evidence" value="ECO:0000318"/>
    <property type="project" value="GO_Central"/>
</dbReference>
<dbReference type="GO" id="GO:0006099">
    <property type="term" value="P:tricarboxylic acid cycle"/>
    <property type="evidence" value="ECO:0000318"/>
    <property type="project" value="GO_Central"/>
</dbReference>
<dbReference type="CDD" id="cd01362">
    <property type="entry name" value="Fumarase_classII"/>
    <property type="match status" value="1"/>
</dbReference>
<dbReference type="FunFam" id="1.10.40.30:FF:000002">
    <property type="entry name" value="Fumarate hydratase class II"/>
    <property type="match status" value="1"/>
</dbReference>
<dbReference type="FunFam" id="1.10.275.10:FF:000001">
    <property type="entry name" value="Fumarate hydratase, mitochondrial"/>
    <property type="match status" value="1"/>
</dbReference>
<dbReference type="FunFam" id="1.20.200.10:FF:000001">
    <property type="entry name" value="Fumarate hydratase, mitochondrial"/>
    <property type="match status" value="1"/>
</dbReference>
<dbReference type="Gene3D" id="1.10.40.30">
    <property type="entry name" value="Fumarase/aspartase (C-terminal domain)"/>
    <property type="match status" value="1"/>
</dbReference>
<dbReference type="Gene3D" id="1.20.200.10">
    <property type="entry name" value="Fumarase/aspartase (Central domain)"/>
    <property type="match status" value="1"/>
</dbReference>
<dbReference type="Gene3D" id="1.10.275.10">
    <property type="entry name" value="Fumarase/aspartase (N-terminal domain)"/>
    <property type="match status" value="1"/>
</dbReference>
<dbReference type="HAMAP" id="MF_00743">
    <property type="entry name" value="FumaraseC"/>
    <property type="match status" value="1"/>
</dbReference>
<dbReference type="InterPro" id="IPR005677">
    <property type="entry name" value="Fum_hydII"/>
</dbReference>
<dbReference type="InterPro" id="IPR024083">
    <property type="entry name" value="Fumarase/histidase_N"/>
</dbReference>
<dbReference type="InterPro" id="IPR018951">
    <property type="entry name" value="Fumarase_C_C"/>
</dbReference>
<dbReference type="InterPro" id="IPR020557">
    <property type="entry name" value="Fumarate_lyase_CS"/>
</dbReference>
<dbReference type="InterPro" id="IPR000362">
    <property type="entry name" value="Fumarate_lyase_fam"/>
</dbReference>
<dbReference type="InterPro" id="IPR022761">
    <property type="entry name" value="Fumarate_lyase_N"/>
</dbReference>
<dbReference type="InterPro" id="IPR008948">
    <property type="entry name" value="L-Aspartase-like"/>
</dbReference>
<dbReference type="NCBIfam" id="TIGR00979">
    <property type="entry name" value="fumC_II"/>
    <property type="match status" value="1"/>
</dbReference>
<dbReference type="NCBIfam" id="NF008909">
    <property type="entry name" value="PRK12273.1"/>
    <property type="match status" value="1"/>
</dbReference>
<dbReference type="PANTHER" id="PTHR11444">
    <property type="entry name" value="ASPARTATEAMMONIA/ARGININOSUCCINATE/ADENYLOSUCCINATE LYASE"/>
    <property type="match status" value="1"/>
</dbReference>
<dbReference type="PANTHER" id="PTHR11444:SF1">
    <property type="entry name" value="FUMARATE HYDRATASE, MITOCHONDRIAL"/>
    <property type="match status" value="1"/>
</dbReference>
<dbReference type="Pfam" id="PF10415">
    <property type="entry name" value="FumaraseC_C"/>
    <property type="match status" value="1"/>
</dbReference>
<dbReference type="Pfam" id="PF00206">
    <property type="entry name" value="Lyase_1"/>
    <property type="match status" value="1"/>
</dbReference>
<dbReference type="PRINTS" id="PR00149">
    <property type="entry name" value="FUMRATELYASE"/>
</dbReference>
<dbReference type="SUPFAM" id="SSF48557">
    <property type="entry name" value="L-aspartase-like"/>
    <property type="match status" value="1"/>
</dbReference>
<dbReference type="PROSITE" id="PS00163">
    <property type="entry name" value="FUMARATE_LYASES"/>
    <property type="match status" value="1"/>
</dbReference>
<sequence length="463" mass="50975">MQFRIEHDTMGEIKVNDSQYWGAQTQRSLENFKIGTEKMPKELIGAFAKLKRSLAVVNHKLGKLSLEKSQAIIKACDCILKGELCGEFPLAIWQTGSGTQTNMNLNEVIANKATEILGGNFREKKLIHPNDDVNMSQSSNDTFPTAMHIVSVLEITHRLLPSLENLLKTFKEKSQQFKEIVKIGRTHLQDATPLTLGQEFSGYASMLEHSKQQILESLEHLRELAIGGTAVGTGLNAHKELSEKVAEELSQFSGVKFVSAPNKFHALTSHDAIAYAHGAFKALAANLMKIANDIRWLASGPRCGLGELNIPENEPGSSIMPGKVNPTQCEAMTMVAVQVMGNDTAIGIAASQGNFELNVFKPVIIYNFLQSLRLLSDSMESFNIHCASGIEPNREKIDYYLHHSLMLVTALNPHVGYENAAKIAKNAHKKGISLKESALELKLLSAEDFDKFVVPEKMIGPKA</sequence>
<protein>
    <recommendedName>
        <fullName evidence="1">Fumarate hydratase class II</fullName>
        <shortName evidence="1">Fumarase C</shortName>
        <ecNumber evidence="1">4.2.1.2</ecNumber>
    </recommendedName>
    <alternativeName>
        <fullName evidence="1">Aerobic fumarase</fullName>
    </alternativeName>
    <alternativeName>
        <fullName evidence="1">Iron-independent fumarase</fullName>
    </alternativeName>
</protein>
<keyword id="KW-0963">Cytoplasm</keyword>
<keyword id="KW-0456">Lyase</keyword>
<keyword id="KW-1185">Reference proteome</keyword>
<keyword id="KW-0816">Tricarboxylic acid cycle</keyword>
<feature type="chain" id="PRO_0000161280" description="Fumarate hydratase class II">
    <location>
        <begin position="1"/>
        <end position="463"/>
    </location>
</feature>
<feature type="active site" description="Proton donor/acceptor" evidence="1">
    <location>
        <position position="187"/>
    </location>
</feature>
<feature type="active site" evidence="1">
    <location>
        <position position="317"/>
    </location>
</feature>
<feature type="binding site" evidence="1">
    <location>
        <begin position="97"/>
        <end position="99"/>
    </location>
    <ligand>
        <name>substrate</name>
    </ligand>
</feature>
<feature type="binding site" description="in site B" evidence="1">
    <location>
        <begin position="128"/>
        <end position="131"/>
    </location>
    <ligand>
        <name>substrate</name>
    </ligand>
</feature>
<feature type="binding site" evidence="1">
    <location>
        <begin position="138"/>
        <end position="140"/>
    </location>
    <ligand>
        <name>substrate</name>
    </ligand>
</feature>
<feature type="binding site" evidence="1">
    <location>
        <position position="186"/>
    </location>
    <ligand>
        <name>substrate</name>
    </ligand>
</feature>
<feature type="binding site" evidence="1">
    <location>
        <position position="318"/>
    </location>
    <ligand>
        <name>substrate</name>
    </ligand>
</feature>
<feature type="binding site" evidence="1">
    <location>
        <begin position="323"/>
        <end position="325"/>
    </location>
    <ligand>
        <name>substrate</name>
    </ligand>
</feature>
<feature type="site" description="Important for catalytic activity" evidence="1">
    <location>
        <position position="330"/>
    </location>
</feature>